<comment type="function">
    <text evidence="1">RNA chaperone with significant RNA binding, RNA strand exchange and RNA duplexing activities. May regulate ProP activity through an RNA-based, post-transcriptional mechanism.</text>
</comment>
<comment type="subcellular location">
    <subcellularLocation>
        <location evidence="1">Cytoplasm</location>
    </subcellularLocation>
</comment>
<comment type="similarity">
    <text evidence="1">Belongs to the ProQ family.</text>
</comment>
<name>PROQ_ERWT9</name>
<reference key="1">
    <citation type="journal article" date="2008" name="Environ. Microbiol.">
        <title>The genome of Erwinia tasmaniensis strain Et1/99, a non-pathogenic bacterium in the genus Erwinia.</title>
        <authorList>
            <person name="Kube M."/>
            <person name="Migdoll A.M."/>
            <person name="Mueller I."/>
            <person name="Kuhl H."/>
            <person name="Beck A."/>
            <person name="Reinhardt R."/>
            <person name="Geider K."/>
        </authorList>
    </citation>
    <scope>NUCLEOTIDE SEQUENCE [LARGE SCALE GENOMIC DNA]</scope>
    <source>
        <strain>DSM 17950 / CFBP 7177 / CIP 109463 / NCPPB 4357 / Et1/99</strain>
    </source>
</reference>
<evidence type="ECO:0000255" key="1">
    <source>
        <dbReference type="HAMAP-Rule" id="MF_00749"/>
    </source>
</evidence>
<evidence type="ECO:0000256" key="2">
    <source>
        <dbReference type="SAM" id="MobiDB-lite"/>
    </source>
</evidence>
<dbReference type="EMBL" id="CU468135">
    <property type="protein sequence ID" value="CAO96561.1"/>
    <property type="molecule type" value="Genomic_DNA"/>
</dbReference>
<dbReference type="RefSeq" id="WP_012441255.1">
    <property type="nucleotide sequence ID" value="NC_010694.1"/>
</dbReference>
<dbReference type="SMR" id="B2VJ55"/>
<dbReference type="STRING" id="465817.ETA_15150"/>
<dbReference type="KEGG" id="eta:ETA_15150"/>
<dbReference type="eggNOG" id="COG3109">
    <property type="taxonomic scope" value="Bacteria"/>
</dbReference>
<dbReference type="HOGENOM" id="CLU_113254_0_0_6"/>
<dbReference type="OrthoDB" id="8421419at2"/>
<dbReference type="Proteomes" id="UP000001726">
    <property type="component" value="Chromosome"/>
</dbReference>
<dbReference type="GO" id="GO:0005829">
    <property type="term" value="C:cytosol"/>
    <property type="evidence" value="ECO:0007669"/>
    <property type="project" value="TreeGrafter"/>
</dbReference>
<dbReference type="GO" id="GO:0033592">
    <property type="term" value="F:RNA strand annealing activity"/>
    <property type="evidence" value="ECO:0007669"/>
    <property type="project" value="UniProtKB-UniRule"/>
</dbReference>
<dbReference type="GO" id="GO:0034057">
    <property type="term" value="F:RNA strand-exchange activity"/>
    <property type="evidence" value="ECO:0007669"/>
    <property type="project" value="UniProtKB-UniRule"/>
</dbReference>
<dbReference type="GO" id="GO:0010608">
    <property type="term" value="P:post-transcriptional regulation of gene expression"/>
    <property type="evidence" value="ECO:0007669"/>
    <property type="project" value="InterPro"/>
</dbReference>
<dbReference type="FunFam" id="1.10.1710.10:FF:000001">
    <property type="entry name" value="RNA chaperone ProQ"/>
    <property type="match status" value="1"/>
</dbReference>
<dbReference type="Gene3D" id="1.10.1710.10">
    <property type="entry name" value="ProQ/FinO domain"/>
    <property type="match status" value="1"/>
</dbReference>
<dbReference type="HAMAP" id="MF_00749">
    <property type="entry name" value="ProQ"/>
    <property type="match status" value="1"/>
</dbReference>
<dbReference type="InterPro" id="IPR023529">
    <property type="entry name" value="ProQ"/>
</dbReference>
<dbReference type="InterPro" id="IPR016103">
    <property type="entry name" value="ProQ/FinO"/>
</dbReference>
<dbReference type="InterPro" id="IPR036442">
    <property type="entry name" value="ProQ/FinO_sf"/>
</dbReference>
<dbReference type="InterPro" id="IPR035236">
    <property type="entry name" value="ProQ_C"/>
</dbReference>
<dbReference type="NCBIfam" id="NF003434">
    <property type="entry name" value="PRK04950.1"/>
    <property type="match status" value="1"/>
</dbReference>
<dbReference type="PANTHER" id="PTHR38106">
    <property type="entry name" value="RNA CHAPERONE PROQ"/>
    <property type="match status" value="1"/>
</dbReference>
<dbReference type="PANTHER" id="PTHR38106:SF1">
    <property type="entry name" value="RNA CHAPERONE PROQ"/>
    <property type="match status" value="1"/>
</dbReference>
<dbReference type="Pfam" id="PF04352">
    <property type="entry name" value="ProQ"/>
    <property type="match status" value="1"/>
</dbReference>
<dbReference type="Pfam" id="PF17516">
    <property type="entry name" value="ProQ_C"/>
    <property type="match status" value="1"/>
</dbReference>
<dbReference type="SMART" id="SM00945">
    <property type="entry name" value="ProQ"/>
    <property type="match status" value="1"/>
</dbReference>
<dbReference type="SUPFAM" id="SSF48657">
    <property type="entry name" value="FinO-like"/>
    <property type="match status" value="1"/>
</dbReference>
<organism>
    <name type="scientific">Erwinia tasmaniensis (strain DSM 17950 / CFBP 7177 / CIP 109463 / NCPPB 4357 / Et1/99)</name>
    <dbReference type="NCBI Taxonomy" id="465817"/>
    <lineage>
        <taxon>Bacteria</taxon>
        <taxon>Pseudomonadati</taxon>
        <taxon>Pseudomonadota</taxon>
        <taxon>Gammaproteobacteria</taxon>
        <taxon>Enterobacterales</taxon>
        <taxon>Erwiniaceae</taxon>
        <taxon>Erwinia</taxon>
    </lineage>
</organism>
<keyword id="KW-0143">Chaperone</keyword>
<keyword id="KW-0963">Cytoplasm</keyword>
<keyword id="KW-1185">Reference proteome</keyword>
<keyword id="KW-0694">RNA-binding</keyword>
<gene>
    <name evidence="1" type="primary">proQ</name>
    <name type="ordered locus">ETA_15150</name>
</gene>
<protein>
    <recommendedName>
        <fullName evidence="1">RNA chaperone ProQ</fullName>
    </recommendedName>
</protein>
<sequence length="230" mass="25417">MENQPKLNSTKEVIAFLAERFPLCFSAEGEARPLKIGIFQDLVERVQGEMSLSKTQLRSALRLYTSSWRYLYGIKAGAIRVDLDGNACGQLDEQHVEHARKQLEEAKARVQAQREQHQAKKREAGEATAPRRPRKPARKPAAEGEQSRSVSGKPSRPQAARPASAPRAESRVEQRKPVTDTTALQVGQSIKVTAGKNAMDATILEISKDGVRVQLASGLAMIVRAEHLQF</sequence>
<accession>B2VJ55</accession>
<feature type="chain" id="PRO_1000133297" description="RNA chaperone ProQ">
    <location>
        <begin position="1"/>
        <end position="230"/>
    </location>
</feature>
<feature type="region of interest" description="Disordered" evidence="2">
    <location>
        <begin position="105"/>
        <end position="182"/>
    </location>
</feature>
<feature type="compositionally biased region" description="Basic and acidic residues" evidence="2">
    <location>
        <begin position="105"/>
        <end position="125"/>
    </location>
</feature>
<feature type="compositionally biased region" description="Low complexity" evidence="2">
    <location>
        <begin position="154"/>
        <end position="167"/>
    </location>
</feature>
<feature type="compositionally biased region" description="Basic and acidic residues" evidence="2">
    <location>
        <begin position="168"/>
        <end position="178"/>
    </location>
</feature>
<proteinExistence type="inferred from homology"/>